<gene>
    <name evidence="1" type="primary">mnmC</name>
    <name type="ordered locus">Maqu_1170</name>
</gene>
<reference key="1">
    <citation type="journal article" date="2011" name="Appl. Environ. Microbiol.">
        <title>Genomic potential of Marinobacter aquaeolei, a biogeochemical 'opportunitroph'.</title>
        <authorList>
            <person name="Singer E."/>
            <person name="Webb E.A."/>
            <person name="Nelson W.C."/>
            <person name="Heidelberg J.F."/>
            <person name="Ivanova N."/>
            <person name="Pati A."/>
            <person name="Edwards K.J."/>
        </authorList>
    </citation>
    <scope>NUCLEOTIDE SEQUENCE [LARGE SCALE GENOMIC DNA]</scope>
    <source>
        <strain>ATCC 700491 / DSM 11845 / VT8</strain>
    </source>
</reference>
<protein>
    <recommendedName>
        <fullName evidence="1">tRNA 5-methylaminomethyl-2-thiouridine biosynthesis bifunctional protein MnmC</fullName>
        <shortName evidence="1">tRNA mnm(5)s(2)U biosynthesis bifunctional protein</shortName>
    </recommendedName>
    <domain>
        <recommendedName>
            <fullName evidence="1">tRNA (mnm(5)s(2)U34)-methyltransferase</fullName>
            <ecNumber evidence="1">2.1.1.61</ecNumber>
        </recommendedName>
    </domain>
    <domain>
        <recommendedName>
            <fullName evidence="1">FAD-dependent cmnm(5)s(2)U34 oxidoreductase</fullName>
            <ecNumber evidence="1">1.5.-.-</ecNumber>
        </recommendedName>
    </domain>
</protein>
<keyword id="KW-0963">Cytoplasm</keyword>
<keyword id="KW-0274">FAD</keyword>
<keyword id="KW-0285">Flavoprotein</keyword>
<keyword id="KW-0489">Methyltransferase</keyword>
<keyword id="KW-0511">Multifunctional enzyme</keyword>
<keyword id="KW-0560">Oxidoreductase</keyword>
<keyword id="KW-0949">S-adenosyl-L-methionine</keyword>
<keyword id="KW-0808">Transferase</keyword>
<keyword id="KW-0819">tRNA processing</keyword>
<accession>A1TZU2</accession>
<evidence type="ECO:0000255" key="1">
    <source>
        <dbReference type="HAMAP-Rule" id="MF_01102"/>
    </source>
</evidence>
<name>MNMC_MARN8</name>
<feature type="chain" id="PRO_0000348001" description="tRNA 5-methylaminomethyl-2-thiouridine biosynthesis bifunctional protein MnmC">
    <location>
        <begin position="1"/>
        <end position="631"/>
    </location>
</feature>
<feature type="region of interest" description="tRNA (mnm(5)s(2)U34)-methyltransferase">
    <location>
        <begin position="1"/>
        <end position="243"/>
    </location>
</feature>
<feature type="region of interest" description="FAD-dependent cmnm(5)s(2)U34 oxidoreductase">
    <location>
        <begin position="261"/>
        <end position="631"/>
    </location>
</feature>
<proteinExistence type="inferred from homology"/>
<dbReference type="EC" id="2.1.1.61" evidence="1"/>
<dbReference type="EC" id="1.5.-.-" evidence="1"/>
<dbReference type="EMBL" id="CP000514">
    <property type="protein sequence ID" value="ABM18261.1"/>
    <property type="molecule type" value="Genomic_DNA"/>
</dbReference>
<dbReference type="RefSeq" id="WP_011784678.1">
    <property type="nucleotide sequence ID" value="NC_008740.1"/>
</dbReference>
<dbReference type="SMR" id="A1TZU2"/>
<dbReference type="STRING" id="351348.Maqu_1170"/>
<dbReference type="KEGG" id="maq:Maqu_1170"/>
<dbReference type="eggNOG" id="COG0665">
    <property type="taxonomic scope" value="Bacteria"/>
</dbReference>
<dbReference type="eggNOG" id="COG4121">
    <property type="taxonomic scope" value="Bacteria"/>
</dbReference>
<dbReference type="HOGENOM" id="CLU_022427_1_0_6"/>
<dbReference type="OrthoDB" id="9786494at2"/>
<dbReference type="Proteomes" id="UP000000998">
    <property type="component" value="Chromosome"/>
</dbReference>
<dbReference type="GO" id="GO:0005737">
    <property type="term" value="C:cytoplasm"/>
    <property type="evidence" value="ECO:0007669"/>
    <property type="project" value="UniProtKB-SubCell"/>
</dbReference>
<dbReference type="GO" id="GO:0050660">
    <property type="term" value="F:flavin adenine dinucleotide binding"/>
    <property type="evidence" value="ECO:0007669"/>
    <property type="project" value="UniProtKB-UniRule"/>
</dbReference>
<dbReference type="GO" id="GO:0016645">
    <property type="term" value="F:oxidoreductase activity, acting on the CH-NH group of donors"/>
    <property type="evidence" value="ECO:0007669"/>
    <property type="project" value="InterPro"/>
</dbReference>
<dbReference type="GO" id="GO:0004808">
    <property type="term" value="F:tRNA (5-methylaminomethyl-2-thiouridylate)(34)-methyltransferase activity"/>
    <property type="evidence" value="ECO:0007669"/>
    <property type="project" value="UniProtKB-EC"/>
</dbReference>
<dbReference type="GO" id="GO:0032259">
    <property type="term" value="P:methylation"/>
    <property type="evidence" value="ECO:0007669"/>
    <property type="project" value="UniProtKB-KW"/>
</dbReference>
<dbReference type="GO" id="GO:0002097">
    <property type="term" value="P:tRNA wobble base modification"/>
    <property type="evidence" value="ECO:0007669"/>
    <property type="project" value="UniProtKB-UniRule"/>
</dbReference>
<dbReference type="Gene3D" id="3.30.9.10">
    <property type="entry name" value="D-Amino Acid Oxidase, subunit A, domain 2"/>
    <property type="match status" value="1"/>
</dbReference>
<dbReference type="Gene3D" id="3.50.50.60">
    <property type="entry name" value="FAD/NAD(P)-binding domain"/>
    <property type="match status" value="1"/>
</dbReference>
<dbReference type="Gene3D" id="3.40.50.150">
    <property type="entry name" value="Vaccinia Virus protein VP39"/>
    <property type="match status" value="1"/>
</dbReference>
<dbReference type="HAMAP" id="MF_01102">
    <property type="entry name" value="MnmC"/>
    <property type="match status" value="1"/>
</dbReference>
<dbReference type="InterPro" id="IPR006076">
    <property type="entry name" value="FAD-dep_OxRdtase"/>
</dbReference>
<dbReference type="InterPro" id="IPR036188">
    <property type="entry name" value="FAD/NAD-bd_sf"/>
</dbReference>
<dbReference type="InterPro" id="IPR008471">
    <property type="entry name" value="MnmC-like_methylTransf"/>
</dbReference>
<dbReference type="InterPro" id="IPR029063">
    <property type="entry name" value="SAM-dependent_MTases_sf"/>
</dbReference>
<dbReference type="InterPro" id="IPR023032">
    <property type="entry name" value="tRNA_MAMT_biosynth_bifunc_MnmC"/>
</dbReference>
<dbReference type="InterPro" id="IPR047785">
    <property type="entry name" value="tRNA_MNMC2"/>
</dbReference>
<dbReference type="InterPro" id="IPR017610">
    <property type="entry name" value="tRNA_S-uridine_synth_MnmC_C"/>
</dbReference>
<dbReference type="NCBIfam" id="TIGR03197">
    <property type="entry name" value="MnmC_Cterm"/>
    <property type="match status" value="1"/>
</dbReference>
<dbReference type="NCBIfam" id="NF002481">
    <property type="entry name" value="PRK01747.1-2"/>
    <property type="match status" value="1"/>
</dbReference>
<dbReference type="NCBIfam" id="NF033855">
    <property type="entry name" value="tRNA_MNMC2"/>
    <property type="match status" value="1"/>
</dbReference>
<dbReference type="PANTHER" id="PTHR13847">
    <property type="entry name" value="SARCOSINE DEHYDROGENASE-RELATED"/>
    <property type="match status" value="1"/>
</dbReference>
<dbReference type="PANTHER" id="PTHR13847:SF283">
    <property type="entry name" value="TRNA 5-METHYLAMINOMETHYL-2-THIOURIDINE BIOSYNTHESIS BIFUNCTIONAL PROTEIN MNMC"/>
    <property type="match status" value="1"/>
</dbReference>
<dbReference type="Pfam" id="PF01266">
    <property type="entry name" value="DAO"/>
    <property type="match status" value="1"/>
</dbReference>
<dbReference type="Pfam" id="PF05430">
    <property type="entry name" value="Methyltransf_30"/>
    <property type="match status" value="1"/>
</dbReference>
<dbReference type="SUPFAM" id="SSF54373">
    <property type="entry name" value="FAD-linked reductases, C-terminal domain"/>
    <property type="match status" value="1"/>
</dbReference>
<dbReference type="SUPFAM" id="SSF51905">
    <property type="entry name" value="FAD/NAD(P)-binding domain"/>
    <property type="match status" value="1"/>
</dbReference>
<sequence>MITDLRPPAMEPAELIWQDGVPESARFGDVYFSRDDGLAETRYVFIERNGLPGRFAELDRNSHFVIAETGFGTGLNFLATWAEWLAQRPDDQDHAILHFISVERYPLALADLEKALESWPGLQPLARELIDNYPPLIKGTHRLVLGGGAIRLTLCFGDVLDAWNELEFVADAWFLDGFAPSLNPDMWLEKAIHQIRAHSQPGTTLATFTSVGRVRRALADEGFEMAKVPGFGRKREMLTGRLPTSEDVSAPTVGTDPIVIIGAGIAGAALARNLAERGVPVVLADQASGPGAGASGNDQGALYVKLGVEYNDQTELAATALSFSQRFYQRWQGEFWHPSGLLQLAATDQEQDRQRRFLERNTYPENMLAAVTAAEASRIAGMPVQCEGLWFPSSGWIQPARACQTLIDHPHIRTVFDFNVDTLRYVDNHWVIKASDGRSLRATKVVVAAGHESGSLAPVPDGQSLRLKPIRGQVTRLPADDCQLPDVVVCGTKYLNPAYDGSAITGATFDLRDDNPEPTPEGHQENLDQLRELLPSVNISKHIQAEHLEGRVAFRCATHDYQPVAGPCPDNNEISRTGVYLLTGLGSKGLVWAPLLAEYLADRICQQPACLNTRLARRVETGRLYRNQLTV</sequence>
<organism>
    <name type="scientific">Marinobacter nauticus (strain ATCC 700491 / DSM 11845 / VT8)</name>
    <name type="common">Marinobacter aquaeolei</name>
    <dbReference type="NCBI Taxonomy" id="351348"/>
    <lineage>
        <taxon>Bacteria</taxon>
        <taxon>Pseudomonadati</taxon>
        <taxon>Pseudomonadota</taxon>
        <taxon>Gammaproteobacteria</taxon>
        <taxon>Pseudomonadales</taxon>
        <taxon>Marinobacteraceae</taxon>
        <taxon>Marinobacter</taxon>
    </lineage>
</organism>
<comment type="function">
    <text evidence="1">Catalyzes the last two steps in the biosynthesis of 5-methylaminomethyl-2-thiouridine (mnm(5)s(2)U) at the wobble position (U34) in tRNA. Catalyzes the FAD-dependent demodification of cmnm(5)s(2)U34 to nm(5)s(2)U34, followed by the transfer of a methyl group from S-adenosyl-L-methionine to nm(5)s(2)U34, to form mnm(5)s(2)U34.</text>
</comment>
<comment type="catalytic activity">
    <reaction evidence="1">
        <text>5-aminomethyl-2-thiouridine(34) in tRNA + S-adenosyl-L-methionine = 5-methylaminomethyl-2-thiouridine(34) in tRNA + S-adenosyl-L-homocysteine + H(+)</text>
        <dbReference type="Rhea" id="RHEA:19569"/>
        <dbReference type="Rhea" id="RHEA-COMP:10195"/>
        <dbReference type="Rhea" id="RHEA-COMP:10197"/>
        <dbReference type="ChEBI" id="CHEBI:15378"/>
        <dbReference type="ChEBI" id="CHEBI:57856"/>
        <dbReference type="ChEBI" id="CHEBI:59789"/>
        <dbReference type="ChEBI" id="CHEBI:74454"/>
        <dbReference type="ChEBI" id="CHEBI:74455"/>
        <dbReference type="EC" id="2.1.1.61"/>
    </reaction>
</comment>
<comment type="cofactor">
    <cofactor evidence="1">
        <name>FAD</name>
        <dbReference type="ChEBI" id="CHEBI:57692"/>
    </cofactor>
</comment>
<comment type="subcellular location">
    <subcellularLocation>
        <location evidence="1">Cytoplasm</location>
    </subcellularLocation>
</comment>
<comment type="similarity">
    <text evidence="1">In the N-terminal section; belongs to the methyltransferase superfamily. tRNA (mnm(5)s(2)U34)-methyltransferase family.</text>
</comment>
<comment type="similarity">
    <text evidence="1">In the C-terminal section; belongs to the DAO family.</text>
</comment>